<sequence length="191" mass="22265">MKLDVFAGQEKSELSMIEVARAILEERGRDNEMYFSDLVNEIQNYLGKSDAGIRHALPFFYTDLNTDGSFIPLGENKWGLRSWYAIDEIDEEIITLEEDEDGAQKRKKKRVNAFMDGDEDAIDYRDDDPEDEDFTEESAEVEYDEEDPDDEKSEVESYDSELNEIIPEDDFEEVDINEEDEEDEEDEEPVL</sequence>
<dbReference type="EMBL" id="AE014074">
    <property type="protein sequence ID" value="AAM80240.1"/>
    <property type="status" value="ALT_INIT"/>
    <property type="molecule type" value="Genomic_DNA"/>
</dbReference>
<dbReference type="RefSeq" id="WP_002988147.1">
    <property type="nucleotide sequence ID" value="NC_004070.1"/>
</dbReference>
<dbReference type="SMR" id="P0DF34"/>
<dbReference type="GeneID" id="69900233"/>
<dbReference type="KEGG" id="spg:SpyM3_1633"/>
<dbReference type="HOGENOM" id="CLU_116648_0_0_9"/>
<dbReference type="Proteomes" id="UP000000564">
    <property type="component" value="Chromosome"/>
</dbReference>
<dbReference type="GO" id="GO:0000428">
    <property type="term" value="C:DNA-directed RNA polymerase complex"/>
    <property type="evidence" value="ECO:0007669"/>
    <property type="project" value="UniProtKB-KW"/>
</dbReference>
<dbReference type="GO" id="GO:0003899">
    <property type="term" value="F:DNA-directed RNA polymerase activity"/>
    <property type="evidence" value="ECO:0007669"/>
    <property type="project" value="UniProtKB-UniRule"/>
</dbReference>
<dbReference type="GO" id="GO:0006351">
    <property type="term" value="P:DNA-templated transcription"/>
    <property type="evidence" value="ECO:0007669"/>
    <property type="project" value="InterPro"/>
</dbReference>
<dbReference type="GO" id="GO:0006355">
    <property type="term" value="P:regulation of DNA-templated transcription"/>
    <property type="evidence" value="ECO:0007669"/>
    <property type="project" value="UniProtKB-UniRule"/>
</dbReference>
<dbReference type="Gene3D" id="1.10.10.1250">
    <property type="entry name" value="RNA polymerase, subunit delta, N-terminal domain"/>
    <property type="match status" value="1"/>
</dbReference>
<dbReference type="HAMAP" id="MF_00357">
    <property type="entry name" value="RNApol_bact_RpoE"/>
    <property type="match status" value="1"/>
</dbReference>
<dbReference type="InterPro" id="IPR007759">
    <property type="entry name" value="Asxl_HARE-HTH"/>
</dbReference>
<dbReference type="InterPro" id="IPR038087">
    <property type="entry name" value="RNAP_delta_N_dom_sf"/>
</dbReference>
<dbReference type="InterPro" id="IPR029757">
    <property type="entry name" value="RpoE"/>
</dbReference>
<dbReference type="NCBIfam" id="TIGR04567">
    <property type="entry name" value="RNAP_delt_lowGC"/>
    <property type="match status" value="1"/>
</dbReference>
<dbReference type="Pfam" id="PF05066">
    <property type="entry name" value="HARE-HTH"/>
    <property type="match status" value="1"/>
</dbReference>
<dbReference type="PROSITE" id="PS51913">
    <property type="entry name" value="HTH_HARE"/>
    <property type="match status" value="1"/>
</dbReference>
<evidence type="ECO:0000250" key="1"/>
<evidence type="ECO:0000255" key="2">
    <source>
        <dbReference type="PROSITE-ProRule" id="PRU01261"/>
    </source>
</evidence>
<evidence type="ECO:0000256" key="3">
    <source>
        <dbReference type="SAM" id="MobiDB-lite"/>
    </source>
</evidence>
<evidence type="ECO:0000305" key="4"/>
<feature type="chain" id="PRO_0000204332" description="Probable DNA-directed RNA polymerase subunit delta">
    <location>
        <begin position="1"/>
        <end position="191"/>
    </location>
</feature>
<feature type="domain" description="HTH HARE-type" evidence="2">
    <location>
        <begin position="14"/>
        <end position="83"/>
    </location>
</feature>
<feature type="region of interest" description="Disordered" evidence="3">
    <location>
        <begin position="118"/>
        <end position="191"/>
    </location>
</feature>
<gene>
    <name type="primary">rpoE</name>
    <name type="ordered locus">SpyM3_1633</name>
</gene>
<protein>
    <recommendedName>
        <fullName>Probable DNA-directed RNA polymerase subunit delta</fullName>
    </recommendedName>
    <alternativeName>
        <fullName>RNAP delta factor</fullName>
    </alternativeName>
</protein>
<accession>P0DF34</accession>
<accession>P58053</accession>
<accession>P66720</accession>
<organism>
    <name type="scientific">Streptococcus pyogenes serotype M3 (strain ATCC BAA-595 / MGAS315)</name>
    <dbReference type="NCBI Taxonomy" id="198466"/>
    <lineage>
        <taxon>Bacteria</taxon>
        <taxon>Bacillati</taxon>
        <taxon>Bacillota</taxon>
        <taxon>Bacilli</taxon>
        <taxon>Lactobacillales</taxon>
        <taxon>Streptococcaceae</taxon>
        <taxon>Streptococcus</taxon>
    </lineage>
</organism>
<comment type="function">
    <text evidence="1">Participates in both the initiation and recycling phases of transcription. In the presence of the delta subunit, RNAP displays an increased specificity of transcription, a decreased affinity for nucleic acids, and an increased efficiency of RNA synthesis because of enhanced recycling (By similarity).</text>
</comment>
<comment type="subunit">
    <text evidence="1">RNAP is composed of a core of 2 alpha, a beta and a beta' subunits. The core is associated with a delta subunit and one of several sigma factors (By similarity).</text>
</comment>
<comment type="similarity">
    <text evidence="4">Belongs to the RpoE family.</text>
</comment>
<comment type="sequence caution" evidence="4">
    <conflict type="erroneous initiation">
        <sequence resource="EMBL-CDS" id="AAM80240"/>
    </conflict>
</comment>
<proteinExistence type="inferred from homology"/>
<keyword id="KW-0240">DNA-directed RNA polymerase</keyword>
<keyword id="KW-0548">Nucleotidyltransferase</keyword>
<keyword id="KW-0804">Transcription</keyword>
<keyword id="KW-0808">Transferase</keyword>
<name>RPOE_STRP3</name>
<reference key="1">
    <citation type="journal article" date="2002" name="Proc. Natl. Acad. Sci. U.S.A.">
        <title>Genome sequence of a serotype M3 strain of group A Streptococcus: phage-encoded toxins, the high-virulence phenotype, and clone emergence.</title>
        <authorList>
            <person name="Beres S.B."/>
            <person name="Sylva G.L."/>
            <person name="Barbian K.D."/>
            <person name="Lei B."/>
            <person name="Hoff J.S."/>
            <person name="Mammarella N.D."/>
            <person name="Liu M.-Y."/>
            <person name="Smoot J.C."/>
            <person name="Porcella S.F."/>
            <person name="Parkins L.D."/>
            <person name="Campbell D.S."/>
            <person name="Smith T.M."/>
            <person name="McCormick J.K."/>
            <person name="Leung D.Y.M."/>
            <person name="Schlievert P.M."/>
            <person name="Musser J.M."/>
        </authorList>
    </citation>
    <scope>NUCLEOTIDE SEQUENCE [LARGE SCALE GENOMIC DNA]</scope>
    <source>
        <strain>ATCC BAA-595 / MGAS315</strain>
    </source>
</reference>